<sequence>MSERYSGPLVVEGKLADAERMKQESNYLRGTITDDLNDGLTGGFNGDNFLLIRFHGMYQQDDRDIRAERAEQKLEPRHAMMLRCRLPGGVMTPQQWLAIDKFAGEKTLYGSIRITNRQTFQFHGILKGDLKSAHQLLHEVGLDALATANDVNRNVLCTSNPVESELHQQAYEWAKKISEHLLPRTRAYAEVWLDKEKVATTDEEPILGPTYLPRKFKTTVVIPPQNDVDLHANDLNFVAISDNGQLVGFNVLVGGGLSIAHGDKTTYPRTASELGYIPLAQTLAVAEAVVTTQRDWGNRTNRKNAKTKYTLERVGVDTFKQEVERRAGMTFETVRPYAFTGRGDRIGWVKGIDNKWHLTLFIENGRLLDYPGRPLKTGMAEIAKIHKGDFRLTANQNLIVAGVATRDKAKIEALARQYGLIDDSVTEQRQNSMACVSLPTCPLAMAEAERFLPEFVTQVEGIMHKHGVGDDHIVLRVTGCPNGCGRAMLAEIGLVGKAIGRYNLHIGGNREGTRIPRMYRENITEKEILTEIDQLVARWAGERHSGEGFGDFAIRVGIVKPVLDPAIDFYD</sequence>
<keyword id="KW-0004">4Fe-4S</keyword>
<keyword id="KW-0028">Amino-acid biosynthesis</keyword>
<keyword id="KW-0198">Cysteine biosynthesis</keyword>
<keyword id="KW-0349">Heme</keyword>
<keyword id="KW-0408">Iron</keyword>
<keyword id="KW-0411">Iron-sulfur</keyword>
<keyword id="KW-0479">Metal-binding</keyword>
<keyword id="KW-0521">NADP</keyword>
<keyword id="KW-0560">Oxidoreductase</keyword>
<reference key="1">
    <citation type="submission" date="2009-06" db="EMBL/GenBank/DDBJ databases">
        <title>Complete sequence of Dickeya zeae Ech1591.</title>
        <authorList>
            <consortium name="US DOE Joint Genome Institute"/>
            <person name="Lucas S."/>
            <person name="Copeland A."/>
            <person name="Lapidus A."/>
            <person name="Glavina del Rio T."/>
            <person name="Tice H."/>
            <person name="Bruce D."/>
            <person name="Goodwin L."/>
            <person name="Pitluck S."/>
            <person name="Chertkov O."/>
            <person name="Brettin T."/>
            <person name="Detter J.C."/>
            <person name="Han C."/>
            <person name="Larimer F."/>
            <person name="Land M."/>
            <person name="Hauser L."/>
            <person name="Kyrpides N."/>
            <person name="Ovchinnikova G."/>
            <person name="Balakrishnan V."/>
            <person name="Glasner J."/>
            <person name="Perna N.T."/>
        </authorList>
    </citation>
    <scope>NUCLEOTIDE SEQUENCE [LARGE SCALE GENOMIC DNA]</scope>
    <source>
        <strain>Ech1591</strain>
    </source>
</reference>
<protein>
    <recommendedName>
        <fullName evidence="1">Sulfite reductase [NADPH] hemoprotein beta-component</fullName>
        <shortName evidence="1">SiR-HP</shortName>
        <shortName evidence="1">SiRHP</shortName>
        <ecNumber evidence="1">1.8.1.2</ecNumber>
    </recommendedName>
</protein>
<evidence type="ECO:0000255" key="1">
    <source>
        <dbReference type="HAMAP-Rule" id="MF_01540"/>
    </source>
</evidence>
<comment type="function">
    <text evidence="1">Component of the sulfite reductase complex that catalyzes the 6-electron reduction of sulfite to sulfide. This is one of several activities required for the biosynthesis of L-cysteine from sulfate.</text>
</comment>
<comment type="catalytic activity">
    <reaction evidence="1">
        <text>hydrogen sulfide + 3 NADP(+) + 3 H2O = sulfite + 3 NADPH + 4 H(+)</text>
        <dbReference type="Rhea" id="RHEA:13801"/>
        <dbReference type="ChEBI" id="CHEBI:15377"/>
        <dbReference type="ChEBI" id="CHEBI:15378"/>
        <dbReference type="ChEBI" id="CHEBI:17359"/>
        <dbReference type="ChEBI" id="CHEBI:29919"/>
        <dbReference type="ChEBI" id="CHEBI:57783"/>
        <dbReference type="ChEBI" id="CHEBI:58349"/>
        <dbReference type="EC" id="1.8.1.2"/>
    </reaction>
</comment>
<comment type="cofactor">
    <cofactor evidence="1">
        <name>siroheme</name>
        <dbReference type="ChEBI" id="CHEBI:60052"/>
    </cofactor>
    <text evidence="1">Binds 1 siroheme per subunit.</text>
</comment>
<comment type="cofactor">
    <cofactor evidence="1">
        <name>[4Fe-4S] cluster</name>
        <dbReference type="ChEBI" id="CHEBI:49883"/>
    </cofactor>
    <text evidence="1">Binds 1 [4Fe-4S] cluster per subunit.</text>
</comment>
<comment type="pathway">
    <text evidence="1">Sulfur metabolism; hydrogen sulfide biosynthesis; hydrogen sulfide from sulfite (NADPH route): step 1/1.</text>
</comment>
<comment type="subunit">
    <text evidence="1">Alpha(8)-beta(8). The alpha component is a flavoprotein, the beta component is a hemoprotein.</text>
</comment>
<comment type="similarity">
    <text evidence="1">Belongs to the nitrite and sulfite reductase 4Fe-4S domain family.</text>
</comment>
<name>CYSI_DICC1</name>
<proteinExistence type="inferred from homology"/>
<organism>
    <name type="scientific">Dickeya chrysanthemi (strain Ech1591)</name>
    <name type="common">Dickeya zeae (strain Ech1591)</name>
    <dbReference type="NCBI Taxonomy" id="561229"/>
    <lineage>
        <taxon>Bacteria</taxon>
        <taxon>Pseudomonadati</taxon>
        <taxon>Pseudomonadota</taxon>
        <taxon>Gammaproteobacteria</taxon>
        <taxon>Enterobacterales</taxon>
        <taxon>Pectobacteriaceae</taxon>
        <taxon>Dickeya</taxon>
    </lineage>
</organism>
<accession>C6CLS0</accession>
<feature type="chain" id="PRO_0000388483" description="Sulfite reductase [NADPH] hemoprotein beta-component">
    <location>
        <begin position="1"/>
        <end position="571"/>
    </location>
</feature>
<feature type="binding site" evidence="1">
    <location>
        <position position="435"/>
    </location>
    <ligand>
        <name>[4Fe-4S] cluster</name>
        <dbReference type="ChEBI" id="CHEBI:49883"/>
    </ligand>
</feature>
<feature type="binding site" evidence="1">
    <location>
        <position position="441"/>
    </location>
    <ligand>
        <name>[4Fe-4S] cluster</name>
        <dbReference type="ChEBI" id="CHEBI:49883"/>
    </ligand>
</feature>
<feature type="binding site" evidence="1">
    <location>
        <position position="480"/>
    </location>
    <ligand>
        <name>[4Fe-4S] cluster</name>
        <dbReference type="ChEBI" id="CHEBI:49883"/>
    </ligand>
</feature>
<feature type="binding site" evidence="1">
    <location>
        <position position="484"/>
    </location>
    <ligand>
        <name>[4Fe-4S] cluster</name>
        <dbReference type="ChEBI" id="CHEBI:49883"/>
    </ligand>
</feature>
<feature type="binding site" description="axial binding residue" evidence="1">
    <location>
        <position position="484"/>
    </location>
    <ligand>
        <name>siroheme</name>
        <dbReference type="ChEBI" id="CHEBI:60052"/>
    </ligand>
    <ligandPart>
        <name>Fe</name>
        <dbReference type="ChEBI" id="CHEBI:18248"/>
    </ligandPart>
</feature>
<gene>
    <name evidence="1" type="primary">cysI</name>
    <name type="ordered locus">Dd1591_0828</name>
</gene>
<dbReference type="EC" id="1.8.1.2" evidence="1"/>
<dbReference type="EMBL" id="CP001655">
    <property type="protein sequence ID" value="ACT05707.1"/>
    <property type="molecule type" value="Genomic_DNA"/>
</dbReference>
<dbReference type="RefSeq" id="WP_012768586.1">
    <property type="nucleotide sequence ID" value="NC_012912.1"/>
</dbReference>
<dbReference type="SMR" id="C6CLS0"/>
<dbReference type="STRING" id="561229.Dd1591_0828"/>
<dbReference type="GeneID" id="45078943"/>
<dbReference type="KEGG" id="dze:Dd1591_0828"/>
<dbReference type="eggNOG" id="COG0155">
    <property type="taxonomic scope" value="Bacteria"/>
</dbReference>
<dbReference type="HOGENOM" id="CLU_001975_3_2_6"/>
<dbReference type="OrthoDB" id="3189055at2"/>
<dbReference type="UniPathway" id="UPA00140">
    <property type="reaction ID" value="UER00207"/>
</dbReference>
<dbReference type="Proteomes" id="UP000002735">
    <property type="component" value="Chromosome"/>
</dbReference>
<dbReference type="GO" id="GO:0009337">
    <property type="term" value="C:sulfite reductase complex (NADPH)"/>
    <property type="evidence" value="ECO:0007669"/>
    <property type="project" value="InterPro"/>
</dbReference>
<dbReference type="GO" id="GO:0051539">
    <property type="term" value="F:4 iron, 4 sulfur cluster binding"/>
    <property type="evidence" value="ECO:0007669"/>
    <property type="project" value="UniProtKB-KW"/>
</dbReference>
<dbReference type="GO" id="GO:0020037">
    <property type="term" value="F:heme binding"/>
    <property type="evidence" value="ECO:0007669"/>
    <property type="project" value="InterPro"/>
</dbReference>
<dbReference type="GO" id="GO:0046872">
    <property type="term" value="F:metal ion binding"/>
    <property type="evidence" value="ECO:0007669"/>
    <property type="project" value="UniProtKB-KW"/>
</dbReference>
<dbReference type="GO" id="GO:0050661">
    <property type="term" value="F:NADP binding"/>
    <property type="evidence" value="ECO:0007669"/>
    <property type="project" value="InterPro"/>
</dbReference>
<dbReference type="GO" id="GO:0050311">
    <property type="term" value="F:sulfite reductase (ferredoxin) activity"/>
    <property type="evidence" value="ECO:0007669"/>
    <property type="project" value="TreeGrafter"/>
</dbReference>
<dbReference type="GO" id="GO:0004783">
    <property type="term" value="F:sulfite reductase (NADPH) activity"/>
    <property type="evidence" value="ECO:0007669"/>
    <property type="project" value="UniProtKB-UniRule"/>
</dbReference>
<dbReference type="GO" id="GO:0019344">
    <property type="term" value="P:cysteine biosynthetic process"/>
    <property type="evidence" value="ECO:0007669"/>
    <property type="project" value="UniProtKB-KW"/>
</dbReference>
<dbReference type="GO" id="GO:0070814">
    <property type="term" value="P:hydrogen sulfide biosynthetic process"/>
    <property type="evidence" value="ECO:0007669"/>
    <property type="project" value="UniProtKB-UniRule"/>
</dbReference>
<dbReference type="GO" id="GO:0000103">
    <property type="term" value="P:sulfate assimilation"/>
    <property type="evidence" value="ECO:0007669"/>
    <property type="project" value="UniProtKB-UniRule"/>
</dbReference>
<dbReference type="FunFam" id="3.30.413.10:FF:000003">
    <property type="entry name" value="Sulfite reductase [NADPH] hemoprotein beta-component"/>
    <property type="match status" value="1"/>
</dbReference>
<dbReference type="FunFam" id="3.30.413.10:FF:000004">
    <property type="entry name" value="Sulfite reductase [NADPH] hemoprotein beta-component"/>
    <property type="match status" value="1"/>
</dbReference>
<dbReference type="Gene3D" id="3.30.413.10">
    <property type="entry name" value="Sulfite Reductase Hemoprotein, domain 1"/>
    <property type="match status" value="2"/>
</dbReference>
<dbReference type="HAMAP" id="MF_01540">
    <property type="entry name" value="CysI"/>
    <property type="match status" value="1"/>
</dbReference>
<dbReference type="InterPro" id="IPR011786">
    <property type="entry name" value="CysI"/>
</dbReference>
<dbReference type="InterPro" id="IPR005117">
    <property type="entry name" value="NiRdtase/SiRdtase_haem-b_fer"/>
</dbReference>
<dbReference type="InterPro" id="IPR036136">
    <property type="entry name" value="Nit/Sulf_reduc_fer-like_dom_sf"/>
</dbReference>
<dbReference type="InterPro" id="IPR006067">
    <property type="entry name" value="NO2/SO3_Rdtase_4Fe4S_dom"/>
</dbReference>
<dbReference type="InterPro" id="IPR045169">
    <property type="entry name" value="NO2/SO3_Rdtase_4Fe4S_prot"/>
</dbReference>
<dbReference type="InterPro" id="IPR045854">
    <property type="entry name" value="NO2/SO3_Rdtase_4Fe4S_sf"/>
</dbReference>
<dbReference type="InterPro" id="IPR006066">
    <property type="entry name" value="NO2/SO3_Rdtase_FeS/sirohaem_BS"/>
</dbReference>
<dbReference type="NCBIfam" id="TIGR02041">
    <property type="entry name" value="CysI"/>
    <property type="match status" value="1"/>
</dbReference>
<dbReference type="NCBIfam" id="NF010029">
    <property type="entry name" value="PRK13504.1"/>
    <property type="match status" value="1"/>
</dbReference>
<dbReference type="PANTHER" id="PTHR11493:SF47">
    <property type="entry name" value="SULFITE REDUCTASE [NADPH] SUBUNIT BETA"/>
    <property type="match status" value="1"/>
</dbReference>
<dbReference type="PANTHER" id="PTHR11493">
    <property type="entry name" value="SULFITE REDUCTASE [NADPH] SUBUNIT BETA-RELATED"/>
    <property type="match status" value="1"/>
</dbReference>
<dbReference type="Pfam" id="PF01077">
    <property type="entry name" value="NIR_SIR"/>
    <property type="match status" value="1"/>
</dbReference>
<dbReference type="Pfam" id="PF03460">
    <property type="entry name" value="NIR_SIR_ferr"/>
    <property type="match status" value="2"/>
</dbReference>
<dbReference type="PRINTS" id="PR00397">
    <property type="entry name" value="SIROHAEM"/>
</dbReference>
<dbReference type="SUPFAM" id="SSF56014">
    <property type="entry name" value="Nitrite and sulphite reductase 4Fe-4S domain-like"/>
    <property type="match status" value="2"/>
</dbReference>
<dbReference type="SUPFAM" id="SSF55124">
    <property type="entry name" value="Nitrite/Sulfite reductase N-terminal domain-like"/>
    <property type="match status" value="2"/>
</dbReference>
<dbReference type="PROSITE" id="PS00365">
    <property type="entry name" value="NIR_SIR"/>
    <property type="match status" value="1"/>
</dbReference>